<organism>
    <name type="scientific">Pseudomonas syringae pv. syringae (strain B728a)</name>
    <dbReference type="NCBI Taxonomy" id="205918"/>
    <lineage>
        <taxon>Bacteria</taxon>
        <taxon>Pseudomonadati</taxon>
        <taxon>Pseudomonadota</taxon>
        <taxon>Gammaproteobacteria</taxon>
        <taxon>Pseudomonadales</taxon>
        <taxon>Pseudomonadaceae</taxon>
        <taxon>Pseudomonas</taxon>
        <taxon>Pseudomonas syringae</taxon>
    </lineage>
</organism>
<keyword id="KW-0067">ATP-binding</keyword>
<keyword id="KW-0997">Cell inner membrane</keyword>
<keyword id="KW-1003">Cell membrane</keyword>
<keyword id="KW-0472">Membrane</keyword>
<keyword id="KW-0500">Molybdenum</keyword>
<keyword id="KW-0547">Nucleotide-binding</keyword>
<keyword id="KW-1278">Translocase</keyword>
<keyword id="KW-0813">Transport</keyword>
<accession>Q4ZSS5</accession>
<reference key="1">
    <citation type="journal article" date="2005" name="Proc. Natl. Acad. Sci. U.S.A.">
        <title>Comparison of the complete genome sequences of Pseudomonas syringae pv. syringae B728a and pv. tomato DC3000.</title>
        <authorList>
            <person name="Feil H."/>
            <person name="Feil W.S."/>
            <person name="Chain P."/>
            <person name="Larimer F."/>
            <person name="Dibartolo G."/>
            <person name="Copeland A."/>
            <person name="Lykidis A."/>
            <person name="Trong S."/>
            <person name="Nolan M."/>
            <person name="Goltsman E."/>
            <person name="Thiel J."/>
            <person name="Malfatti S."/>
            <person name="Loper J.E."/>
            <person name="Lapidus A."/>
            <person name="Detter J.C."/>
            <person name="Land M."/>
            <person name="Richardson P.M."/>
            <person name="Kyrpides N.C."/>
            <person name="Ivanova N."/>
            <person name="Lindow S.E."/>
        </authorList>
    </citation>
    <scope>NUCLEOTIDE SEQUENCE [LARGE SCALE GENOMIC DNA]</scope>
    <source>
        <strain>B728a</strain>
    </source>
</reference>
<evidence type="ECO:0000255" key="1">
    <source>
        <dbReference type="HAMAP-Rule" id="MF_01705"/>
    </source>
</evidence>
<evidence type="ECO:0000255" key="2">
    <source>
        <dbReference type="PROSITE-ProRule" id="PRU01213"/>
    </source>
</evidence>
<protein>
    <recommendedName>
        <fullName evidence="1">Molybdenum import ATP-binding protein ModC</fullName>
        <ecNumber evidence="1">7.3.2.5</ecNumber>
    </recommendedName>
</protein>
<sequence>MASPIEVRLQMAYPDFTVRTDLSLPGSGITALFGPSGSGKTTCLRCIAGLEKADQSFIRVHDEVWQDTEKGIFLAPYKRAIGYVFQEASLFAHLSVRDNLEFGMKRIPRQQRRIQLPQASELLGIDHLLQRNPDKLSGGERQRVGIARALLTSPRLMLLDEPLAALDTRRKSEILPYLERLHRELDIPMLYVSHAQDEVARLADHLVLLDAGNVLASGPIHETLARLDLPLAMGSDAGVVIEGTVSAYDQHYQLLTVTLPDSKLSMRVAHAQMQVGTLLRIKVQARDVSLNLQPDYQSSILNRLPVTVIEEALADNSAHVLVKLDAGGTPLLARITRYSSDQLNLHRGQSLWAQIKAVAVLA</sequence>
<feature type="chain" id="PRO_0000271680" description="Molybdenum import ATP-binding protein ModC">
    <location>
        <begin position="1"/>
        <end position="362"/>
    </location>
</feature>
<feature type="domain" description="ABC transporter" evidence="1">
    <location>
        <begin position="2"/>
        <end position="236"/>
    </location>
</feature>
<feature type="domain" description="Mop" evidence="2">
    <location>
        <begin position="297"/>
        <end position="362"/>
    </location>
</feature>
<feature type="binding site" evidence="1">
    <location>
        <begin position="34"/>
        <end position="41"/>
    </location>
    <ligand>
        <name>ATP</name>
        <dbReference type="ChEBI" id="CHEBI:30616"/>
    </ligand>
</feature>
<name>MODC_PSEU2</name>
<gene>
    <name evidence="1" type="primary">modC</name>
    <name type="ordered locus">Psyr_2758</name>
</gene>
<comment type="function">
    <text evidence="1">Part of the ABC transporter complex ModABC involved in molybdenum import. Responsible for energy coupling to the transport system.</text>
</comment>
<comment type="catalytic activity">
    <reaction evidence="1">
        <text>molybdate(out) + ATP + H2O = molybdate(in) + ADP + phosphate + H(+)</text>
        <dbReference type="Rhea" id="RHEA:22020"/>
        <dbReference type="ChEBI" id="CHEBI:15377"/>
        <dbReference type="ChEBI" id="CHEBI:15378"/>
        <dbReference type="ChEBI" id="CHEBI:30616"/>
        <dbReference type="ChEBI" id="CHEBI:36264"/>
        <dbReference type="ChEBI" id="CHEBI:43474"/>
        <dbReference type="ChEBI" id="CHEBI:456216"/>
        <dbReference type="EC" id="7.3.2.5"/>
    </reaction>
</comment>
<comment type="subunit">
    <text evidence="1">The complex is composed of two ATP-binding proteins (ModC), two transmembrane proteins (ModB) and a solute-binding protein (ModA).</text>
</comment>
<comment type="subcellular location">
    <subcellularLocation>
        <location evidence="1">Cell inner membrane</location>
        <topology evidence="1">Peripheral membrane protein</topology>
    </subcellularLocation>
</comment>
<comment type="similarity">
    <text evidence="1">Belongs to the ABC transporter superfamily. Molybdate importer (TC 3.A.1.8) family.</text>
</comment>
<dbReference type="EC" id="7.3.2.5" evidence="1"/>
<dbReference type="EMBL" id="CP000075">
    <property type="protein sequence ID" value="AAY37797.1"/>
    <property type="molecule type" value="Genomic_DNA"/>
</dbReference>
<dbReference type="RefSeq" id="WP_011267945.1">
    <property type="nucleotide sequence ID" value="NC_007005.1"/>
</dbReference>
<dbReference type="RefSeq" id="YP_235835.1">
    <property type="nucleotide sequence ID" value="NC_007005.1"/>
</dbReference>
<dbReference type="SMR" id="Q4ZSS5"/>
<dbReference type="STRING" id="205918.Psyr_2758"/>
<dbReference type="KEGG" id="psb:Psyr_2758"/>
<dbReference type="PATRIC" id="fig|205918.7.peg.2820"/>
<dbReference type="eggNOG" id="COG4148">
    <property type="taxonomic scope" value="Bacteria"/>
</dbReference>
<dbReference type="HOGENOM" id="CLU_000604_1_1_6"/>
<dbReference type="OrthoDB" id="9802264at2"/>
<dbReference type="Proteomes" id="UP000000426">
    <property type="component" value="Chromosome"/>
</dbReference>
<dbReference type="GO" id="GO:0005886">
    <property type="term" value="C:plasma membrane"/>
    <property type="evidence" value="ECO:0007669"/>
    <property type="project" value="UniProtKB-SubCell"/>
</dbReference>
<dbReference type="GO" id="GO:0015412">
    <property type="term" value="F:ABC-type molybdate transporter activity"/>
    <property type="evidence" value="ECO:0007669"/>
    <property type="project" value="UniProtKB-EC"/>
</dbReference>
<dbReference type="GO" id="GO:0005524">
    <property type="term" value="F:ATP binding"/>
    <property type="evidence" value="ECO:0007669"/>
    <property type="project" value="UniProtKB-KW"/>
</dbReference>
<dbReference type="GO" id="GO:0016887">
    <property type="term" value="F:ATP hydrolysis activity"/>
    <property type="evidence" value="ECO:0007669"/>
    <property type="project" value="InterPro"/>
</dbReference>
<dbReference type="FunFam" id="3.40.50.300:FF:000634">
    <property type="entry name" value="Molybdenum import ATP-binding protein ModC"/>
    <property type="match status" value="1"/>
</dbReference>
<dbReference type="Gene3D" id="2.40.50.100">
    <property type="match status" value="1"/>
</dbReference>
<dbReference type="Gene3D" id="3.40.50.300">
    <property type="entry name" value="P-loop containing nucleotide triphosphate hydrolases"/>
    <property type="match status" value="1"/>
</dbReference>
<dbReference type="InterPro" id="IPR003593">
    <property type="entry name" value="AAA+_ATPase"/>
</dbReference>
<dbReference type="InterPro" id="IPR003439">
    <property type="entry name" value="ABC_transporter-like_ATP-bd"/>
</dbReference>
<dbReference type="InterPro" id="IPR017871">
    <property type="entry name" value="ABC_transporter-like_CS"/>
</dbReference>
<dbReference type="InterPro" id="IPR008995">
    <property type="entry name" value="Mo/tungstate-bd_C_term_dom"/>
</dbReference>
<dbReference type="InterPro" id="IPR011868">
    <property type="entry name" value="ModC_ABC_ATP-bd"/>
</dbReference>
<dbReference type="InterPro" id="IPR050334">
    <property type="entry name" value="Molybdenum_import_ModC"/>
</dbReference>
<dbReference type="InterPro" id="IPR004606">
    <property type="entry name" value="Mop_domain"/>
</dbReference>
<dbReference type="InterPro" id="IPR027417">
    <property type="entry name" value="P-loop_NTPase"/>
</dbReference>
<dbReference type="InterPro" id="IPR005116">
    <property type="entry name" value="Transp-assoc_OB_typ1"/>
</dbReference>
<dbReference type="NCBIfam" id="TIGR02142">
    <property type="entry name" value="modC_ABC"/>
    <property type="match status" value="1"/>
</dbReference>
<dbReference type="PANTHER" id="PTHR43514">
    <property type="entry name" value="ABC TRANSPORTER I FAMILY MEMBER 10"/>
    <property type="match status" value="1"/>
</dbReference>
<dbReference type="PANTHER" id="PTHR43514:SF10">
    <property type="entry name" value="MOLYBDENUM IMPORT ATP-BINDING PROTEIN MODC 2"/>
    <property type="match status" value="1"/>
</dbReference>
<dbReference type="Pfam" id="PF00005">
    <property type="entry name" value="ABC_tran"/>
    <property type="match status" value="1"/>
</dbReference>
<dbReference type="Pfam" id="PF03459">
    <property type="entry name" value="TOBE"/>
    <property type="match status" value="1"/>
</dbReference>
<dbReference type="SMART" id="SM00382">
    <property type="entry name" value="AAA"/>
    <property type="match status" value="1"/>
</dbReference>
<dbReference type="SUPFAM" id="SSF50331">
    <property type="entry name" value="MOP-like"/>
    <property type="match status" value="1"/>
</dbReference>
<dbReference type="SUPFAM" id="SSF52540">
    <property type="entry name" value="P-loop containing nucleoside triphosphate hydrolases"/>
    <property type="match status" value="1"/>
</dbReference>
<dbReference type="PROSITE" id="PS00211">
    <property type="entry name" value="ABC_TRANSPORTER_1"/>
    <property type="match status" value="1"/>
</dbReference>
<dbReference type="PROSITE" id="PS50893">
    <property type="entry name" value="ABC_TRANSPORTER_2"/>
    <property type="match status" value="1"/>
</dbReference>
<dbReference type="PROSITE" id="PS51241">
    <property type="entry name" value="MODC"/>
    <property type="match status" value="1"/>
</dbReference>
<dbReference type="PROSITE" id="PS51866">
    <property type="entry name" value="MOP"/>
    <property type="match status" value="1"/>
</dbReference>
<proteinExistence type="inferred from homology"/>